<evidence type="ECO:0000250" key="1"/>
<evidence type="ECO:0000250" key="2">
    <source>
        <dbReference type="UniProtKB" id="P07195"/>
    </source>
</evidence>
<evidence type="ECO:0000305" key="3"/>
<protein>
    <recommendedName>
        <fullName>L-lactate dehydrogenase B chain</fullName>
        <shortName>LDH-B</shortName>
        <ecNumber evidence="2">1.1.1.27</ecNumber>
    </recommendedName>
</protein>
<accession>Q5E9B1</accession>
<accession>A5PJ87</accession>
<accession>Q3T0X4</accession>
<accession>Q9MYV5</accession>
<feature type="initiator methionine" description="Removed" evidence="2">
    <location>
        <position position="1"/>
    </location>
</feature>
<feature type="chain" id="PRO_0000239139" description="L-lactate dehydrogenase B chain">
    <location>
        <begin position="2"/>
        <end position="334"/>
    </location>
</feature>
<feature type="active site" description="Proton acceptor" evidence="1">
    <location>
        <position position="194"/>
    </location>
</feature>
<feature type="binding site" evidence="1">
    <location>
        <begin position="53"/>
        <end position="58"/>
    </location>
    <ligand>
        <name>NAD(+)</name>
        <dbReference type="ChEBI" id="CHEBI:57540"/>
    </ligand>
</feature>
<feature type="binding site" evidence="1">
    <location>
        <position position="100"/>
    </location>
    <ligand>
        <name>NAD(+)</name>
        <dbReference type="ChEBI" id="CHEBI:57540"/>
    </ligand>
</feature>
<feature type="binding site" evidence="1">
    <location>
        <position position="107"/>
    </location>
    <ligand>
        <name>substrate</name>
    </ligand>
</feature>
<feature type="binding site" evidence="1">
    <location>
        <position position="139"/>
    </location>
    <ligand>
        <name>NAD(+)</name>
        <dbReference type="ChEBI" id="CHEBI:57540"/>
    </ligand>
</feature>
<feature type="binding site" evidence="1">
    <location>
        <position position="139"/>
    </location>
    <ligand>
        <name>substrate</name>
    </ligand>
</feature>
<feature type="binding site" evidence="1">
    <location>
        <position position="170"/>
    </location>
    <ligand>
        <name>substrate</name>
    </ligand>
</feature>
<feature type="binding site" evidence="1">
    <location>
        <position position="249"/>
    </location>
    <ligand>
        <name>substrate</name>
    </ligand>
</feature>
<feature type="modified residue" description="N-acetylalanine" evidence="2">
    <location>
        <position position="2"/>
    </location>
</feature>
<feature type="modified residue" description="N6-acetyllysine" evidence="2">
    <location>
        <position position="7"/>
    </location>
</feature>
<feature type="modified residue" description="Phosphoserine" evidence="2">
    <location>
        <position position="44"/>
    </location>
</feature>
<feature type="modified residue" description="N6-acetyllysine" evidence="2">
    <location>
        <position position="58"/>
    </location>
</feature>
<feature type="modified residue" description="N6-acetyllysine" evidence="2">
    <location>
        <position position="119"/>
    </location>
</feature>
<feature type="modified residue" description="Phosphotyrosine" evidence="2">
    <location>
        <position position="240"/>
    </location>
</feature>
<feature type="modified residue" description="N6-acetyllysine" evidence="2">
    <location>
        <position position="329"/>
    </location>
</feature>
<feature type="sequence conflict" description="In Ref. 2; AAX09026." evidence="3" ref="2">
    <original>L</original>
    <variation>S</variation>
    <location>
        <position position="8"/>
    </location>
</feature>
<feature type="sequence conflict" description="In Ref. 1; CAB96751." evidence="3" ref="1">
    <original>R</original>
    <variation>T</variation>
    <location>
        <position position="18"/>
    </location>
</feature>
<feature type="sequence conflict" description="In Ref. 1; CAB96751." evidence="3" ref="1">
    <original>D</original>
    <variation>A</variation>
    <location>
        <position position="131"/>
    </location>
</feature>
<comment type="function">
    <text evidence="2">Interconverts simultaneously and stereospecifically pyruvate and lactate with concomitant interconversion of NADH and NAD(+).</text>
</comment>
<comment type="catalytic activity">
    <reaction evidence="2">
        <text>(S)-lactate + NAD(+) = pyruvate + NADH + H(+)</text>
        <dbReference type="Rhea" id="RHEA:23444"/>
        <dbReference type="ChEBI" id="CHEBI:15361"/>
        <dbReference type="ChEBI" id="CHEBI:15378"/>
        <dbReference type="ChEBI" id="CHEBI:16651"/>
        <dbReference type="ChEBI" id="CHEBI:57540"/>
        <dbReference type="ChEBI" id="CHEBI:57945"/>
        <dbReference type="EC" id="1.1.1.27"/>
    </reaction>
    <physiologicalReaction direction="left-to-right" evidence="2">
        <dbReference type="Rhea" id="RHEA:23445"/>
    </physiologicalReaction>
    <physiologicalReaction direction="right-to-left" evidence="2">
        <dbReference type="Rhea" id="RHEA:23446"/>
    </physiologicalReaction>
</comment>
<comment type="pathway">
    <text evidence="2">Fermentation; pyruvate fermentation to lactate; (S)-lactate from pyruvate: step 1/1.</text>
</comment>
<comment type="subunit">
    <text evidence="2">Homotetramer. Interacts with PTEN upstream reading frame protein MP31; the interaction leads to inhibition of mitochondrial lactate dehydrogenase activity, preventing conversion of lactate to pyruvate in mitochondria.</text>
</comment>
<comment type="subcellular location">
    <subcellularLocation>
        <location evidence="1">Cytoplasm</location>
    </subcellularLocation>
    <subcellularLocation>
        <location evidence="2">Mitochondrion inner membrane</location>
        <topology evidence="3">Peripheral membrane protein</topology>
    </subcellularLocation>
</comment>
<comment type="similarity">
    <text evidence="3">Belongs to the LDH/MDH superfamily. LDH family.</text>
</comment>
<sequence length="334" mass="36724">MATLKEKLIAPVAEEETRIPNNKITVVGVGQVGMACAISILGKSLTDELALVDVLEDKLKGEMMDLQHGSLFLQTPKIVADKDYSVTANSKIVVVTAGVRQQEGESRLNLVQRNVNVFKFIIPQIVKYSPDCIIIVVSNPVDILTYVTWKLSGLPKHRVIGSGCNLDSARFRYLMAEKLGIHPSSCHGWILGEHGDSSVAVWSGVNVAGVSLQELNPEMGTDNDSENWKEVHKMVVESAYEVIKLKGYTNWAIGLSVADLIESMLKNLSRIHPVSTMVKGMYGIENEVFLSLPCILNARGLTSVINQKLKDEEVAQLKKSADTLWGIQKDLKDL</sequence>
<reference key="1">
    <citation type="journal article" date="2001" name="Asian-Australas. J. Anim. Sci.">
        <title>Cloning and expression of bovine polyadenylate binding protein 1 cDNA in mammary tissues.</title>
        <authorList>
            <person name="Kim J.H."/>
            <person name="Jeon D.H."/>
            <person name="Choi Y.J."/>
            <person name="Baik M.G."/>
        </authorList>
        <dbReference type="AGRICOLA" id="IND23230985"/>
    </citation>
    <scope>NUCLEOTIDE SEQUENCE [MRNA]</scope>
    <source>
        <tissue>Adipose tissue</tissue>
    </source>
</reference>
<reference key="2">
    <citation type="journal article" date="2005" name="BMC Genomics">
        <title>Characterization of 954 bovine full-CDS cDNA sequences.</title>
        <authorList>
            <person name="Harhay G.P."/>
            <person name="Sonstegard T.S."/>
            <person name="Keele J.W."/>
            <person name="Heaton M.P."/>
            <person name="Clawson M.L."/>
            <person name="Snelling W.M."/>
            <person name="Wiedmann R.T."/>
            <person name="Van Tassell C.P."/>
            <person name="Smith T.P.L."/>
        </authorList>
    </citation>
    <scope>NUCLEOTIDE SEQUENCE [LARGE SCALE MRNA]</scope>
</reference>
<reference key="3">
    <citation type="submission" date="2007-06" db="EMBL/GenBank/DDBJ databases">
        <authorList>
            <consortium name="NIH - Mammalian Gene Collection (MGC) project"/>
        </authorList>
    </citation>
    <scope>NUCLEOTIDE SEQUENCE [LARGE SCALE MRNA]</scope>
    <source>
        <strain>Crossbred X Angus</strain>
        <strain>Hereford</strain>
        <tissue>Heart ventricle</tissue>
        <tissue>Ileum</tissue>
    </source>
</reference>
<dbReference type="EC" id="1.1.1.27" evidence="2"/>
<dbReference type="EMBL" id="AJ401268">
    <property type="protein sequence ID" value="CAB96751.1"/>
    <property type="molecule type" value="mRNA"/>
</dbReference>
<dbReference type="EMBL" id="BT021009">
    <property type="protein sequence ID" value="AAX09026.1"/>
    <property type="molecule type" value="mRNA"/>
</dbReference>
<dbReference type="EMBL" id="BC102217">
    <property type="protein sequence ID" value="AAI02218.1"/>
    <property type="molecule type" value="mRNA"/>
</dbReference>
<dbReference type="EMBL" id="BC142006">
    <property type="protein sequence ID" value="AAI42007.1"/>
    <property type="molecule type" value="mRNA"/>
</dbReference>
<dbReference type="RefSeq" id="NP_001303267.1">
    <property type="nucleotide sequence ID" value="NM_001316338.1"/>
</dbReference>
<dbReference type="RefSeq" id="NP_776525.2">
    <property type="nucleotide sequence ID" value="NM_174100.2"/>
</dbReference>
<dbReference type="SMR" id="Q5E9B1"/>
<dbReference type="FunCoup" id="Q5E9B1">
    <property type="interactions" value="823"/>
</dbReference>
<dbReference type="STRING" id="9913.ENSBTAP00000069027"/>
<dbReference type="BindingDB" id="Q5E9B1"/>
<dbReference type="PaxDb" id="9913-ENSBTAP00000026118"/>
<dbReference type="PeptideAtlas" id="Q5E9B1"/>
<dbReference type="Ensembl" id="ENSBTAT00000026118.6">
    <property type="protein sequence ID" value="ENSBTAP00000026118.5"/>
    <property type="gene ID" value="ENSBTAG00000019603.7"/>
</dbReference>
<dbReference type="GeneID" id="281275"/>
<dbReference type="KEGG" id="bta:281275"/>
<dbReference type="CTD" id="3945"/>
<dbReference type="VEuPathDB" id="HostDB:ENSBTAG00000019603"/>
<dbReference type="VGNC" id="VGNC:30824">
    <property type="gene designation" value="LDHB"/>
</dbReference>
<dbReference type="eggNOG" id="KOG1495">
    <property type="taxonomic scope" value="Eukaryota"/>
</dbReference>
<dbReference type="GeneTree" id="ENSGT00940000153525"/>
<dbReference type="HOGENOM" id="CLU_045401_0_2_1"/>
<dbReference type="InParanoid" id="Q5E9B1"/>
<dbReference type="OrthoDB" id="5405561at2759"/>
<dbReference type="TreeFam" id="TF314963"/>
<dbReference type="BRENDA" id="1.1.1.27">
    <property type="organism ID" value="908"/>
</dbReference>
<dbReference type="Reactome" id="R-BTA-70268">
    <property type="pathway name" value="Pyruvate metabolism"/>
</dbReference>
<dbReference type="SABIO-RK" id="Q5E9B1"/>
<dbReference type="UniPathway" id="UPA00554">
    <property type="reaction ID" value="UER00611"/>
</dbReference>
<dbReference type="Proteomes" id="UP000009136">
    <property type="component" value="Chromosome 5"/>
</dbReference>
<dbReference type="Bgee" id="ENSBTAG00000019603">
    <property type="expression patterns" value="Expressed in cardiac ventricle and 106 other cell types or tissues"/>
</dbReference>
<dbReference type="GO" id="GO:0005743">
    <property type="term" value="C:mitochondrial inner membrane"/>
    <property type="evidence" value="ECO:0000250"/>
    <property type="project" value="UniProtKB"/>
</dbReference>
<dbReference type="GO" id="GO:0005739">
    <property type="term" value="C:mitochondrion"/>
    <property type="evidence" value="ECO:0000318"/>
    <property type="project" value="GO_Central"/>
</dbReference>
<dbReference type="GO" id="GO:0004459">
    <property type="term" value="F:L-lactate dehydrogenase activity"/>
    <property type="evidence" value="ECO:0000250"/>
    <property type="project" value="UniProtKB"/>
</dbReference>
<dbReference type="GO" id="GO:0006089">
    <property type="term" value="P:lactate metabolic process"/>
    <property type="evidence" value="ECO:0000318"/>
    <property type="project" value="GO_Central"/>
</dbReference>
<dbReference type="GO" id="GO:0006090">
    <property type="term" value="P:pyruvate metabolic process"/>
    <property type="evidence" value="ECO:0000318"/>
    <property type="project" value="GO_Central"/>
</dbReference>
<dbReference type="CDD" id="cd05293">
    <property type="entry name" value="LDH_1"/>
    <property type="match status" value="1"/>
</dbReference>
<dbReference type="FunFam" id="3.40.50.720:FF:000029">
    <property type="entry name" value="L-lactate dehydrogenase A chain"/>
    <property type="match status" value="1"/>
</dbReference>
<dbReference type="FunFam" id="3.90.110.10:FF:000003">
    <property type="entry name" value="L-lactate dehydrogenase A chain"/>
    <property type="match status" value="1"/>
</dbReference>
<dbReference type="Gene3D" id="3.90.110.10">
    <property type="entry name" value="Lactate dehydrogenase/glycoside hydrolase, family 4, C-terminal"/>
    <property type="match status" value="1"/>
</dbReference>
<dbReference type="Gene3D" id="3.40.50.720">
    <property type="entry name" value="NAD(P)-binding Rossmann-like Domain"/>
    <property type="match status" value="1"/>
</dbReference>
<dbReference type="HAMAP" id="MF_00488">
    <property type="entry name" value="Lactate_dehydrog"/>
    <property type="match status" value="1"/>
</dbReference>
<dbReference type="InterPro" id="IPR001557">
    <property type="entry name" value="L-lactate/malate_DH"/>
</dbReference>
<dbReference type="InterPro" id="IPR011304">
    <property type="entry name" value="L-lactate_DH"/>
</dbReference>
<dbReference type="InterPro" id="IPR018177">
    <property type="entry name" value="L-lactate_DH_AS"/>
</dbReference>
<dbReference type="InterPro" id="IPR022383">
    <property type="entry name" value="Lactate/malate_DH_C"/>
</dbReference>
<dbReference type="InterPro" id="IPR001236">
    <property type="entry name" value="Lactate/malate_DH_N"/>
</dbReference>
<dbReference type="InterPro" id="IPR015955">
    <property type="entry name" value="Lactate_DH/Glyco_Ohase_4_C"/>
</dbReference>
<dbReference type="InterPro" id="IPR036291">
    <property type="entry name" value="NAD(P)-bd_dom_sf"/>
</dbReference>
<dbReference type="NCBIfam" id="TIGR01771">
    <property type="entry name" value="L-LDH-NAD"/>
    <property type="match status" value="1"/>
</dbReference>
<dbReference type="NCBIfam" id="NF000824">
    <property type="entry name" value="PRK00066.1"/>
    <property type="match status" value="1"/>
</dbReference>
<dbReference type="PANTHER" id="PTHR43128">
    <property type="entry name" value="L-2-HYDROXYCARBOXYLATE DEHYDROGENASE (NAD(P)(+))"/>
    <property type="match status" value="1"/>
</dbReference>
<dbReference type="PANTHER" id="PTHR43128:SF2">
    <property type="entry name" value="L-LACTATE DEHYDROGENASE B CHAIN"/>
    <property type="match status" value="1"/>
</dbReference>
<dbReference type="Pfam" id="PF02866">
    <property type="entry name" value="Ldh_1_C"/>
    <property type="match status" value="1"/>
</dbReference>
<dbReference type="Pfam" id="PF00056">
    <property type="entry name" value="Ldh_1_N"/>
    <property type="match status" value="1"/>
</dbReference>
<dbReference type="PIRSF" id="PIRSF000102">
    <property type="entry name" value="Lac_mal_DH"/>
    <property type="match status" value="1"/>
</dbReference>
<dbReference type="PRINTS" id="PR00086">
    <property type="entry name" value="LLDHDRGNASE"/>
</dbReference>
<dbReference type="SUPFAM" id="SSF56327">
    <property type="entry name" value="LDH C-terminal domain-like"/>
    <property type="match status" value="1"/>
</dbReference>
<dbReference type="SUPFAM" id="SSF51735">
    <property type="entry name" value="NAD(P)-binding Rossmann-fold domains"/>
    <property type="match status" value="1"/>
</dbReference>
<dbReference type="PROSITE" id="PS00064">
    <property type="entry name" value="L_LDH"/>
    <property type="match status" value="1"/>
</dbReference>
<name>LDHB_BOVIN</name>
<proteinExistence type="evidence at transcript level"/>
<keyword id="KW-0007">Acetylation</keyword>
<keyword id="KW-0963">Cytoplasm</keyword>
<keyword id="KW-0472">Membrane</keyword>
<keyword id="KW-0496">Mitochondrion</keyword>
<keyword id="KW-0999">Mitochondrion inner membrane</keyword>
<keyword id="KW-0520">NAD</keyword>
<keyword id="KW-0560">Oxidoreductase</keyword>
<keyword id="KW-0597">Phosphoprotein</keyword>
<keyword id="KW-1185">Reference proteome</keyword>
<gene>
    <name type="primary">LDHB</name>
</gene>
<organism>
    <name type="scientific">Bos taurus</name>
    <name type="common">Bovine</name>
    <dbReference type="NCBI Taxonomy" id="9913"/>
    <lineage>
        <taxon>Eukaryota</taxon>
        <taxon>Metazoa</taxon>
        <taxon>Chordata</taxon>
        <taxon>Craniata</taxon>
        <taxon>Vertebrata</taxon>
        <taxon>Euteleostomi</taxon>
        <taxon>Mammalia</taxon>
        <taxon>Eutheria</taxon>
        <taxon>Laurasiatheria</taxon>
        <taxon>Artiodactyla</taxon>
        <taxon>Ruminantia</taxon>
        <taxon>Pecora</taxon>
        <taxon>Bovidae</taxon>
        <taxon>Bovinae</taxon>
        <taxon>Bos</taxon>
    </lineage>
</organism>